<protein>
    <recommendedName>
        <fullName>UPF0321 protein C569.02c</fullName>
    </recommendedName>
</protein>
<organism>
    <name type="scientific">Schizosaccharomyces pombe (strain 972 / ATCC 24843)</name>
    <name type="common">Fission yeast</name>
    <dbReference type="NCBI Taxonomy" id="284812"/>
    <lineage>
        <taxon>Eukaryota</taxon>
        <taxon>Fungi</taxon>
        <taxon>Dikarya</taxon>
        <taxon>Ascomycota</taxon>
        <taxon>Taphrinomycotina</taxon>
        <taxon>Schizosaccharomycetes</taxon>
        <taxon>Schizosaccharomycetales</taxon>
        <taxon>Schizosaccharomycetaceae</taxon>
        <taxon>Schizosaccharomyces</taxon>
    </lineage>
</organism>
<sequence length="113" mass="12764">MLLLFCICCAFIKLVLAEVNLTFVDYAKLPPKYAELLANLTDQHGMVLFDTADVRFEAYNYLVNNITEINTDTDACLCQLLTGQYTTDCYIFDDSVYEGPENINPSTSILIKD</sequence>
<comment type="similarity">
    <text evidence="2">Belongs to the UPF0321 family.</text>
</comment>
<reference key="1">
    <citation type="journal article" date="2002" name="Nature">
        <title>The genome sequence of Schizosaccharomyces pombe.</title>
        <authorList>
            <person name="Wood V."/>
            <person name="Gwilliam R."/>
            <person name="Rajandream M.A."/>
            <person name="Lyne M.H."/>
            <person name="Lyne R."/>
            <person name="Stewart A."/>
            <person name="Sgouros J.G."/>
            <person name="Peat N."/>
            <person name="Hayles J."/>
            <person name="Baker S.G."/>
            <person name="Basham D."/>
            <person name="Bowman S."/>
            <person name="Brooks K."/>
            <person name="Brown D."/>
            <person name="Brown S."/>
            <person name="Chillingworth T."/>
            <person name="Churcher C.M."/>
            <person name="Collins M."/>
            <person name="Connor R."/>
            <person name="Cronin A."/>
            <person name="Davis P."/>
            <person name="Feltwell T."/>
            <person name="Fraser A."/>
            <person name="Gentles S."/>
            <person name="Goble A."/>
            <person name="Hamlin N."/>
            <person name="Harris D.E."/>
            <person name="Hidalgo J."/>
            <person name="Hodgson G."/>
            <person name="Holroyd S."/>
            <person name="Hornsby T."/>
            <person name="Howarth S."/>
            <person name="Huckle E.J."/>
            <person name="Hunt S."/>
            <person name="Jagels K."/>
            <person name="James K.D."/>
            <person name="Jones L."/>
            <person name="Jones M."/>
            <person name="Leather S."/>
            <person name="McDonald S."/>
            <person name="McLean J."/>
            <person name="Mooney P."/>
            <person name="Moule S."/>
            <person name="Mungall K.L."/>
            <person name="Murphy L.D."/>
            <person name="Niblett D."/>
            <person name="Odell C."/>
            <person name="Oliver K."/>
            <person name="O'Neil S."/>
            <person name="Pearson D."/>
            <person name="Quail M.A."/>
            <person name="Rabbinowitsch E."/>
            <person name="Rutherford K.M."/>
            <person name="Rutter S."/>
            <person name="Saunders D."/>
            <person name="Seeger K."/>
            <person name="Sharp S."/>
            <person name="Skelton J."/>
            <person name="Simmonds M.N."/>
            <person name="Squares R."/>
            <person name="Squares S."/>
            <person name="Stevens K."/>
            <person name="Taylor K."/>
            <person name="Taylor R.G."/>
            <person name="Tivey A."/>
            <person name="Walsh S.V."/>
            <person name="Warren T."/>
            <person name="Whitehead S."/>
            <person name="Woodward J.R."/>
            <person name="Volckaert G."/>
            <person name="Aert R."/>
            <person name="Robben J."/>
            <person name="Grymonprez B."/>
            <person name="Weltjens I."/>
            <person name="Vanstreels E."/>
            <person name="Rieger M."/>
            <person name="Schaefer M."/>
            <person name="Mueller-Auer S."/>
            <person name="Gabel C."/>
            <person name="Fuchs M."/>
            <person name="Duesterhoeft A."/>
            <person name="Fritzc C."/>
            <person name="Holzer E."/>
            <person name="Moestl D."/>
            <person name="Hilbert H."/>
            <person name="Borzym K."/>
            <person name="Langer I."/>
            <person name="Beck A."/>
            <person name="Lehrach H."/>
            <person name="Reinhardt R."/>
            <person name="Pohl T.M."/>
            <person name="Eger P."/>
            <person name="Zimmermann W."/>
            <person name="Wedler H."/>
            <person name="Wambutt R."/>
            <person name="Purnelle B."/>
            <person name="Goffeau A."/>
            <person name="Cadieu E."/>
            <person name="Dreano S."/>
            <person name="Gloux S."/>
            <person name="Lelaure V."/>
            <person name="Mottier S."/>
            <person name="Galibert F."/>
            <person name="Aves S.J."/>
            <person name="Xiang Z."/>
            <person name="Hunt C."/>
            <person name="Moore K."/>
            <person name="Hurst S.M."/>
            <person name="Lucas M."/>
            <person name="Rochet M."/>
            <person name="Gaillardin C."/>
            <person name="Tallada V.A."/>
            <person name="Garzon A."/>
            <person name="Thode G."/>
            <person name="Daga R.R."/>
            <person name="Cruzado L."/>
            <person name="Jimenez J."/>
            <person name="Sanchez M."/>
            <person name="del Rey F."/>
            <person name="Benito J."/>
            <person name="Dominguez A."/>
            <person name="Revuelta J.L."/>
            <person name="Moreno S."/>
            <person name="Armstrong J."/>
            <person name="Forsburg S.L."/>
            <person name="Cerutti L."/>
            <person name="Lowe T."/>
            <person name="McCombie W.R."/>
            <person name="Paulsen I."/>
            <person name="Potashkin J."/>
            <person name="Shpakovski G.V."/>
            <person name="Ussery D."/>
            <person name="Barrell B.G."/>
            <person name="Nurse P."/>
        </authorList>
    </citation>
    <scope>NUCLEOTIDE SEQUENCE [LARGE SCALE GENOMIC DNA]</scope>
    <source>
        <strain>972 / ATCC 24843</strain>
    </source>
</reference>
<dbReference type="EMBL" id="CU329672">
    <property type="protein sequence ID" value="CAB42063.1"/>
    <property type="molecule type" value="Genomic_DNA"/>
</dbReference>
<dbReference type="PIR" id="T41404">
    <property type="entry name" value="T41404"/>
</dbReference>
<dbReference type="RefSeq" id="NP_588571.1">
    <property type="nucleotide sequence ID" value="NM_001023558.2"/>
</dbReference>
<dbReference type="STRING" id="284812.Q9Y7S1"/>
<dbReference type="PaxDb" id="4896-SPCC569.02c.1"/>
<dbReference type="EnsemblFungi" id="SPCC569.02c.1">
    <property type="protein sequence ID" value="SPCC569.02c.1:pep"/>
    <property type="gene ID" value="SPCC569.02c"/>
</dbReference>
<dbReference type="KEGG" id="spo:2539456"/>
<dbReference type="PomBase" id="SPCC569.02c"/>
<dbReference type="VEuPathDB" id="FungiDB:SPCC569.02c"/>
<dbReference type="HOGENOM" id="CLU_2086172_0_0_1"/>
<dbReference type="InParanoid" id="Q9Y7S1"/>
<dbReference type="PhylomeDB" id="Q9Y7S1"/>
<dbReference type="PRO" id="PR:Q9Y7S1"/>
<dbReference type="Proteomes" id="UP000002485">
    <property type="component" value="Chromosome III"/>
</dbReference>
<dbReference type="InterPro" id="IPR019445">
    <property type="entry name" value="UPF0321"/>
</dbReference>
<dbReference type="Pfam" id="PF10353">
    <property type="entry name" value="DUF2430"/>
    <property type="match status" value="1"/>
</dbReference>
<keyword id="KW-0325">Glycoprotein</keyword>
<keyword id="KW-1185">Reference proteome</keyword>
<keyword id="KW-0732">Signal</keyword>
<evidence type="ECO:0000255" key="1"/>
<evidence type="ECO:0000305" key="2"/>
<name>YQO2_SCHPO</name>
<proteinExistence type="inferred from homology"/>
<gene>
    <name type="ORF">SPCC569.02c</name>
</gene>
<accession>Q9Y7S1</accession>
<feature type="signal peptide" evidence="1">
    <location>
        <begin position="1"/>
        <end position="17"/>
    </location>
</feature>
<feature type="chain" id="PRO_0000036322" description="UPF0321 protein C569.02c">
    <location>
        <begin position="18"/>
        <end position="113"/>
    </location>
</feature>
<feature type="glycosylation site" description="N-linked (GlcNAc...) asparagine" evidence="1">
    <location>
        <position position="20"/>
    </location>
</feature>
<feature type="glycosylation site" description="N-linked (GlcNAc...) asparagine" evidence="1">
    <location>
        <position position="39"/>
    </location>
</feature>
<feature type="glycosylation site" description="N-linked (GlcNAc...) asparagine" evidence="1">
    <location>
        <position position="65"/>
    </location>
</feature>